<reference key="1">
    <citation type="journal article" date="1982" name="J. Biochem.">
        <title>Amino acid sequence of Synechocystis 6714 ferredoxin: a unique structural feature of unicellular blue-green algal ferredoxin.</title>
        <authorList>
            <person name="Hase T."/>
            <person name="Inoue K."/>
            <person name="Matsubara H."/>
            <person name="Williams M.M."/>
            <person name="Rogers L.J."/>
        </authorList>
    </citation>
    <scope>PROTEIN SEQUENCE OF 2-97</scope>
</reference>
<protein>
    <recommendedName>
        <fullName>Ferredoxin</fullName>
    </recommendedName>
</protein>
<proteinExistence type="evidence at protein level"/>
<comment type="function">
    <text>Ferredoxins are iron-sulfur proteins that transfer electrons in a wide variety of metabolic reactions.</text>
</comment>
<comment type="cofactor">
    <cofactor>
        <name>[2Fe-2S] cluster</name>
        <dbReference type="ChEBI" id="CHEBI:190135"/>
    </cofactor>
    <text>Binds 1 [2Fe-2S] cluster.</text>
</comment>
<comment type="similarity">
    <text evidence="3">Belongs to the 2Fe2S plant-type ferredoxin family.</text>
</comment>
<evidence type="ECO:0000255" key="1">
    <source>
        <dbReference type="PROSITE-ProRule" id="PRU00465"/>
    </source>
</evidence>
<evidence type="ECO:0000269" key="2">
    <source>
    </source>
</evidence>
<evidence type="ECO:0000305" key="3"/>
<feature type="initiator methionine" description="Removed" evidence="2">
    <location>
        <position position="1"/>
    </location>
</feature>
<feature type="chain" id="PRO_0000189382" description="Ferredoxin">
    <location>
        <begin position="2"/>
        <end position="97"/>
    </location>
</feature>
<feature type="domain" description="2Fe-2S ferredoxin-type" evidence="1">
    <location>
        <begin position="4"/>
        <end position="94"/>
    </location>
</feature>
<feature type="binding site" evidence="1">
    <location>
        <position position="40"/>
    </location>
    <ligand>
        <name>[2Fe-2S] cluster</name>
        <dbReference type="ChEBI" id="CHEBI:190135"/>
    </ligand>
</feature>
<feature type="binding site" evidence="1">
    <location>
        <position position="45"/>
    </location>
    <ligand>
        <name>[2Fe-2S] cluster</name>
        <dbReference type="ChEBI" id="CHEBI:190135"/>
    </ligand>
</feature>
<feature type="binding site" evidence="1">
    <location>
        <position position="48"/>
    </location>
    <ligand>
        <name>[2Fe-2S] cluster</name>
        <dbReference type="ChEBI" id="CHEBI:190135"/>
    </ligand>
</feature>
<feature type="binding site" evidence="1">
    <location>
        <position position="78"/>
    </location>
    <ligand>
        <name>[2Fe-2S] cluster</name>
        <dbReference type="ChEBI" id="CHEBI:190135"/>
    </ligand>
</feature>
<dbReference type="RefSeq" id="WP_028946897.1">
    <property type="nucleotide sequence ID" value="NZ_CP007542.1"/>
</dbReference>
<dbReference type="BMRB" id="P00243"/>
<dbReference type="SMR" id="P00243"/>
<dbReference type="MINT" id="P00243"/>
<dbReference type="STRING" id="1147.D082_00960"/>
<dbReference type="eggNOG" id="COG1018">
    <property type="taxonomic scope" value="Bacteria"/>
</dbReference>
<dbReference type="OrthoDB" id="462043at2"/>
<dbReference type="GO" id="GO:0051537">
    <property type="term" value="F:2 iron, 2 sulfur cluster binding"/>
    <property type="evidence" value="ECO:0007669"/>
    <property type="project" value="UniProtKB-KW"/>
</dbReference>
<dbReference type="GO" id="GO:0009055">
    <property type="term" value="F:electron transfer activity"/>
    <property type="evidence" value="ECO:0007669"/>
    <property type="project" value="InterPro"/>
</dbReference>
<dbReference type="GO" id="GO:0046872">
    <property type="term" value="F:metal ion binding"/>
    <property type="evidence" value="ECO:0007669"/>
    <property type="project" value="UniProtKB-KW"/>
</dbReference>
<dbReference type="GO" id="GO:0022900">
    <property type="term" value="P:electron transport chain"/>
    <property type="evidence" value="ECO:0007669"/>
    <property type="project" value="InterPro"/>
</dbReference>
<dbReference type="CDD" id="cd00207">
    <property type="entry name" value="fer2"/>
    <property type="match status" value="1"/>
</dbReference>
<dbReference type="FunFam" id="3.10.20.30:FF:000014">
    <property type="entry name" value="Ferredoxin"/>
    <property type="match status" value="1"/>
</dbReference>
<dbReference type="Gene3D" id="3.10.20.30">
    <property type="match status" value="1"/>
</dbReference>
<dbReference type="InterPro" id="IPR036010">
    <property type="entry name" value="2Fe-2S_ferredoxin-like_sf"/>
</dbReference>
<dbReference type="InterPro" id="IPR001041">
    <property type="entry name" value="2Fe-2S_ferredoxin-type"/>
</dbReference>
<dbReference type="InterPro" id="IPR006058">
    <property type="entry name" value="2Fe2S_fd_BS"/>
</dbReference>
<dbReference type="InterPro" id="IPR012675">
    <property type="entry name" value="Beta-grasp_dom_sf"/>
</dbReference>
<dbReference type="InterPro" id="IPR010241">
    <property type="entry name" value="Fd_pln"/>
</dbReference>
<dbReference type="NCBIfam" id="TIGR02008">
    <property type="entry name" value="fdx_plant"/>
    <property type="match status" value="1"/>
</dbReference>
<dbReference type="PANTHER" id="PTHR43112">
    <property type="entry name" value="FERREDOXIN"/>
    <property type="match status" value="1"/>
</dbReference>
<dbReference type="PANTHER" id="PTHR43112:SF3">
    <property type="entry name" value="FERREDOXIN-2, CHLOROPLASTIC"/>
    <property type="match status" value="1"/>
</dbReference>
<dbReference type="Pfam" id="PF00111">
    <property type="entry name" value="Fer2"/>
    <property type="match status" value="1"/>
</dbReference>
<dbReference type="SUPFAM" id="SSF54292">
    <property type="entry name" value="2Fe-2S ferredoxin-like"/>
    <property type="match status" value="1"/>
</dbReference>
<dbReference type="PROSITE" id="PS00197">
    <property type="entry name" value="2FE2S_FER_1"/>
    <property type="match status" value="1"/>
</dbReference>
<dbReference type="PROSITE" id="PS51085">
    <property type="entry name" value="2FE2S_FER_2"/>
    <property type="match status" value="1"/>
</dbReference>
<sequence length="97" mass="10390">MASYTVKLITPDGENSIECSDDTYILDAAEEAGLDLPYSCRAGACSTCAGKITAGSVDQSDQSFLDDDQIEAGYVLTCVAYPTSDCTIETHKEEDLY</sequence>
<keyword id="KW-0001">2Fe-2S</keyword>
<keyword id="KW-0903">Direct protein sequencing</keyword>
<keyword id="KW-0249">Electron transport</keyword>
<keyword id="KW-0408">Iron</keyword>
<keyword id="KW-0411">Iron-sulfur</keyword>
<keyword id="KW-0479">Metal-binding</keyword>
<keyword id="KW-0813">Transport</keyword>
<name>FER_SYNY4</name>
<accession>P00243</accession>
<organism>
    <name type="scientific">Synechocystis sp. (strain PCC 6714)</name>
    <name type="common">Aphanocapsa sp. (strain PCC 6714)</name>
    <dbReference type="NCBI Taxonomy" id="1147"/>
    <lineage>
        <taxon>Bacteria</taxon>
        <taxon>Bacillati</taxon>
        <taxon>Cyanobacteriota</taxon>
        <taxon>Cyanophyceae</taxon>
        <taxon>Synechococcales</taxon>
        <taxon>Merismopediaceae</taxon>
        <taxon>Synechocystis</taxon>
    </lineage>
</organism>